<evidence type="ECO:0000250" key="1"/>
<evidence type="ECO:0000305" key="2"/>
<name>RL3_HELHP</name>
<proteinExistence type="inferred from homology"/>
<sequence length="192" mass="20928">MEFIVEKIGMSRTIGTKSEAVTLLRVLGAKVCEIYDNGKALVAYSQGKSVNKAIAGQQKKYSLSKEFNRFATLKVSNKEVGELDVASLSEAKRVQVSFKTKGRGFSGAMKRWNFQGGPGAHGSRFHRRLGSIGNREWPGRVQPGKKMAGHYGNELVSAKNDIMSFDKQSAILVLKGSVAGFNGAFGRIQIIK</sequence>
<reference key="1">
    <citation type="journal article" date="2003" name="Proc. Natl. Acad. Sci. U.S.A.">
        <title>The complete genome sequence of the carcinogenic bacterium Helicobacter hepaticus.</title>
        <authorList>
            <person name="Suerbaum S."/>
            <person name="Josenhans C."/>
            <person name="Sterzenbach T."/>
            <person name="Drescher B."/>
            <person name="Brandt P."/>
            <person name="Bell M."/>
            <person name="Droege M."/>
            <person name="Fartmann B."/>
            <person name="Fischer H.-P."/>
            <person name="Ge Z."/>
            <person name="Hoerster A."/>
            <person name="Holland R."/>
            <person name="Klein K."/>
            <person name="Koenig J."/>
            <person name="Macko L."/>
            <person name="Mendz G.L."/>
            <person name="Nyakatura G."/>
            <person name="Schauer D.B."/>
            <person name="Shen Z."/>
            <person name="Weber J."/>
            <person name="Frosch M."/>
            <person name="Fox J.G."/>
        </authorList>
    </citation>
    <scope>NUCLEOTIDE SEQUENCE [LARGE SCALE GENOMIC DNA]</scope>
    <source>
        <strain>ATCC 51449 / 3B1</strain>
    </source>
</reference>
<gene>
    <name type="primary">rplC</name>
    <name type="ordered locus">HH_1378</name>
</gene>
<dbReference type="EMBL" id="AE017125">
    <property type="protein sequence ID" value="AAP77975.1"/>
    <property type="status" value="ALT_INIT"/>
    <property type="molecule type" value="Genomic_DNA"/>
</dbReference>
<dbReference type="RefSeq" id="WP_011116218.1">
    <property type="nucleotide sequence ID" value="NC_004917.1"/>
</dbReference>
<dbReference type="SMR" id="Q7VGE4"/>
<dbReference type="STRING" id="235279.HH_1378"/>
<dbReference type="KEGG" id="hhe:HH_1378"/>
<dbReference type="eggNOG" id="COG0087">
    <property type="taxonomic scope" value="Bacteria"/>
</dbReference>
<dbReference type="HOGENOM" id="CLU_044142_4_1_7"/>
<dbReference type="OrthoDB" id="9806135at2"/>
<dbReference type="Proteomes" id="UP000002495">
    <property type="component" value="Chromosome"/>
</dbReference>
<dbReference type="GO" id="GO:0022625">
    <property type="term" value="C:cytosolic large ribosomal subunit"/>
    <property type="evidence" value="ECO:0007669"/>
    <property type="project" value="TreeGrafter"/>
</dbReference>
<dbReference type="GO" id="GO:0019843">
    <property type="term" value="F:rRNA binding"/>
    <property type="evidence" value="ECO:0007669"/>
    <property type="project" value="UniProtKB-KW"/>
</dbReference>
<dbReference type="GO" id="GO:0003735">
    <property type="term" value="F:structural constituent of ribosome"/>
    <property type="evidence" value="ECO:0007669"/>
    <property type="project" value="InterPro"/>
</dbReference>
<dbReference type="GO" id="GO:0006412">
    <property type="term" value="P:translation"/>
    <property type="evidence" value="ECO:0007669"/>
    <property type="project" value="InterPro"/>
</dbReference>
<dbReference type="Gene3D" id="2.40.30.10">
    <property type="entry name" value="Translation factors"/>
    <property type="match status" value="1"/>
</dbReference>
<dbReference type="InterPro" id="IPR000597">
    <property type="entry name" value="Ribosomal_uL3"/>
</dbReference>
<dbReference type="InterPro" id="IPR019927">
    <property type="entry name" value="Ribosomal_uL3_bac/org-type"/>
</dbReference>
<dbReference type="InterPro" id="IPR009000">
    <property type="entry name" value="Transl_B-barrel_sf"/>
</dbReference>
<dbReference type="NCBIfam" id="TIGR03625">
    <property type="entry name" value="L3_bact"/>
    <property type="match status" value="1"/>
</dbReference>
<dbReference type="PANTHER" id="PTHR11229">
    <property type="entry name" value="50S RIBOSOMAL PROTEIN L3"/>
    <property type="match status" value="1"/>
</dbReference>
<dbReference type="PANTHER" id="PTHR11229:SF16">
    <property type="entry name" value="LARGE RIBOSOMAL SUBUNIT PROTEIN UL3C"/>
    <property type="match status" value="1"/>
</dbReference>
<dbReference type="Pfam" id="PF00297">
    <property type="entry name" value="Ribosomal_L3"/>
    <property type="match status" value="1"/>
</dbReference>
<dbReference type="SUPFAM" id="SSF50447">
    <property type="entry name" value="Translation proteins"/>
    <property type="match status" value="1"/>
</dbReference>
<feature type="chain" id="PRO_0000077107" description="Large ribosomal subunit protein uL3">
    <location>
        <begin position="1"/>
        <end position="192"/>
    </location>
</feature>
<protein>
    <recommendedName>
        <fullName evidence="2">Large ribosomal subunit protein uL3</fullName>
    </recommendedName>
    <alternativeName>
        <fullName>50S ribosomal protein L3</fullName>
    </alternativeName>
</protein>
<accession>Q7VGE4</accession>
<keyword id="KW-1185">Reference proteome</keyword>
<keyword id="KW-0687">Ribonucleoprotein</keyword>
<keyword id="KW-0689">Ribosomal protein</keyword>
<keyword id="KW-0694">RNA-binding</keyword>
<keyword id="KW-0699">rRNA-binding</keyword>
<organism>
    <name type="scientific">Helicobacter hepaticus (strain ATCC 51449 / 3B1)</name>
    <dbReference type="NCBI Taxonomy" id="235279"/>
    <lineage>
        <taxon>Bacteria</taxon>
        <taxon>Pseudomonadati</taxon>
        <taxon>Campylobacterota</taxon>
        <taxon>Epsilonproteobacteria</taxon>
        <taxon>Campylobacterales</taxon>
        <taxon>Helicobacteraceae</taxon>
        <taxon>Helicobacter</taxon>
    </lineage>
</organism>
<comment type="function">
    <text evidence="1">One of the primary rRNA binding proteins, it binds directly near the 3'-end of the 23S rRNA, where it nucleates assembly of the 50S subunit.</text>
</comment>
<comment type="subunit">
    <text evidence="1">Part of the 50S ribosomal subunit. Forms a cluster with proteins L14 and L19 (By similarity).</text>
</comment>
<comment type="similarity">
    <text evidence="2">Belongs to the universal ribosomal protein uL3 family.</text>
</comment>
<comment type="sequence caution" evidence="2">
    <conflict type="erroneous initiation">
        <sequence resource="EMBL-CDS" id="AAP77975"/>
    </conflict>
</comment>